<organism>
    <name type="scientific">Arabidopsis thaliana</name>
    <name type="common">Mouse-ear cress</name>
    <dbReference type="NCBI Taxonomy" id="3702"/>
    <lineage>
        <taxon>Eukaryota</taxon>
        <taxon>Viridiplantae</taxon>
        <taxon>Streptophyta</taxon>
        <taxon>Embryophyta</taxon>
        <taxon>Tracheophyta</taxon>
        <taxon>Spermatophyta</taxon>
        <taxon>Magnoliopsida</taxon>
        <taxon>eudicotyledons</taxon>
        <taxon>Gunneridae</taxon>
        <taxon>Pentapetalae</taxon>
        <taxon>rosids</taxon>
        <taxon>malvids</taxon>
        <taxon>Brassicales</taxon>
        <taxon>Brassicaceae</taxon>
        <taxon>Camelineae</taxon>
        <taxon>Arabidopsis</taxon>
    </lineage>
</organism>
<comment type="function">
    <text evidence="5">Serine/threonine-protein kinase involved in the regulation of auxin signaling. Plays a minor role in the regulation of cellular auxin efflux and cotyledon organogenesis.</text>
</comment>
<comment type="catalytic activity">
    <reaction>
        <text>L-seryl-[protein] + ATP = O-phospho-L-seryl-[protein] + ADP + H(+)</text>
        <dbReference type="Rhea" id="RHEA:17989"/>
        <dbReference type="Rhea" id="RHEA-COMP:9863"/>
        <dbReference type="Rhea" id="RHEA-COMP:11604"/>
        <dbReference type="ChEBI" id="CHEBI:15378"/>
        <dbReference type="ChEBI" id="CHEBI:29999"/>
        <dbReference type="ChEBI" id="CHEBI:30616"/>
        <dbReference type="ChEBI" id="CHEBI:83421"/>
        <dbReference type="ChEBI" id="CHEBI:456216"/>
        <dbReference type="EC" id="2.7.11.1"/>
    </reaction>
</comment>
<comment type="catalytic activity">
    <reaction>
        <text>L-threonyl-[protein] + ATP = O-phospho-L-threonyl-[protein] + ADP + H(+)</text>
        <dbReference type="Rhea" id="RHEA:46608"/>
        <dbReference type="Rhea" id="RHEA-COMP:11060"/>
        <dbReference type="Rhea" id="RHEA-COMP:11605"/>
        <dbReference type="ChEBI" id="CHEBI:15378"/>
        <dbReference type="ChEBI" id="CHEBI:30013"/>
        <dbReference type="ChEBI" id="CHEBI:30616"/>
        <dbReference type="ChEBI" id="CHEBI:61977"/>
        <dbReference type="ChEBI" id="CHEBI:456216"/>
        <dbReference type="EC" id="2.7.11.1"/>
    </reaction>
</comment>
<comment type="interaction">
    <interactant intactId="EBI-1103769">
        <id>Q64FQ2</id>
    </interactant>
    <interactant intactId="EBI-1103587">
        <id>Q9XF67</id>
        <label>PDPK1</label>
    </interactant>
    <organismsDiffer>false</organismsDiffer>
    <experiments>2</experiments>
</comment>
<comment type="developmental stage">
    <text evidence="5">Expressed throughout the embryogenesis in the provascular tissues.</text>
</comment>
<comment type="disruption phenotype">
    <text evidence="5">No visible phenotype under normal growth conditions.</text>
</comment>
<comment type="similarity">
    <text evidence="1">Belongs to the protein kinase superfamily. Ser/Thr protein kinase family.</text>
</comment>
<comment type="sequence caution" evidence="6">
    <conflict type="erroneous gene model prediction">
        <sequence resource="EMBL-CDS" id="AAB95304"/>
    </conflict>
</comment>
<comment type="sequence caution" evidence="6">
    <conflict type="erroneous initiation">
        <sequence resource="EMBL-CDS" id="BAF01078"/>
    </conflict>
    <text>Extended N-terminus.</text>
</comment>
<evidence type="ECO:0000255" key="1">
    <source>
        <dbReference type="PROSITE-ProRule" id="PRU00159"/>
    </source>
</evidence>
<evidence type="ECO:0000255" key="2">
    <source>
        <dbReference type="PROSITE-ProRule" id="PRU00618"/>
    </source>
</evidence>
<evidence type="ECO:0000255" key="3">
    <source>
        <dbReference type="PROSITE-ProRule" id="PRU10027"/>
    </source>
</evidence>
<evidence type="ECO:0000256" key="4">
    <source>
        <dbReference type="SAM" id="MobiDB-lite"/>
    </source>
</evidence>
<evidence type="ECO:0000269" key="5">
    <source>
    </source>
</evidence>
<evidence type="ECO:0000305" key="6"/>
<keyword id="KW-0067">ATP-binding</keyword>
<keyword id="KW-0927">Auxin signaling pathway</keyword>
<keyword id="KW-0217">Developmental protein</keyword>
<keyword id="KW-0418">Kinase</keyword>
<keyword id="KW-0547">Nucleotide-binding</keyword>
<keyword id="KW-0597">Phosphoprotein</keyword>
<keyword id="KW-1185">Reference proteome</keyword>
<keyword id="KW-0723">Serine/threonine-protein kinase</keyword>
<keyword id="KW-0808">Transferase</keyword>
<dbReference type="EC" id="2.7.11.1"/>
<dbReference type="EMBL" id="AY705432">
    <property type="protein sequence ID" value="AAU14162.1"/>
    <property type="molecule type" value="Genomic_DNA"/>
</dbReference>
<dbReference type="EMBL" id="AY705433">
    <property type="protein sequence ID" value="AAU14163.1"/>
    <property type="molecule type" value="mRNA"/>
</dbReference>
<dbReference type="EMBL" id="AC003105">
    <property type="protein sequence ID" value="AAB95304.1"/>
    <property type="status" value="ALT_SEQ"/>
    <property type="molecule type" value="Genomic_DNA"/>
</dbReference>
<dbReference type="EMBL" id="CP002685">
    <property type="protein sequence ID" value="AEC07877.1"/>
    <property type="molecule type" value="Genomic_DNA"/>
</dbReference>
<dbReference type="EMBL" id="AK229209">
    <property type="protein sequence ID" value="BAF01078.1"/>
    <property type="status" value="ALT_INIT"/>
    <property type="molecule type" value="mRNA"/>
</dbReference>
<dbReference type="PIR" id="G84663">
    <property type="entry name" value="G84663"/>
</dbReference>
<dbReference type="RefSeq" id="NP_180238.2">
    <property type="nucleotide sequence ID" value="NM_128227.5"/>
</dbReference>
<dbReference type="SMR" id="Q64FQ2"/>
<dbReference type="BioGRID" id="2563">
    <property type="interactions" value="1"/>
</dbReference>
<dbReference type="FunCoup" id="Q64FQ2">
    <property type="interactions" value="106"/>
</dbReference>
<dbReference type="IntAct" id="Q64FQ2">
    <property type="interactions" value="1"/>
</dbReference>
<dbReference type="STRING" id="3702.Q64FQ2"/>
<dbReference type="PaxDb" id="3702-AT2G26700.1"/>
<dbReference type="EnsemblPlants" id="AT2G26700.1">
    <property type="protein sequence ID" value="AT2G26700.1"/>
    <property type="gene ID" value="AT2G26700"/>
</dbReference>
<dbReference type="GeneID" id="817211"/>
<dbReference type="Gramene" id="AT2G26700.1">
    <property type="protein sequence ID" value="AT2G26700.1"/>
    <property type="gene ID" value="AT2G26700"/>
</dbReference>
<dbReference type="KEGG" id="ath:AT2G26700"/>
<dbReference type="Araport" id="AT2G26700"/>
<dbReference type="TAIR" id="AT2G26700">
    <property type="gene designation" value="PID2"/>
</dbReference>
<dbReference type="eggNOG" id="KOG0610">
    <property type="taxonomic scope" value="Eukaryota"/>
</dbReference>
<dbReference type="eggNOG" id="KOG4198">
    <property type="taxonomic scope" value="Eukaryota"/>
</dbReference>
<dbReference type="HOGENOM" id="CLU_000288_63_30_1"/>
<dbReference type="InParanoid" id="Q64FQ2"/>
<dbReference type="OMA" id="WVPKEET"/>
<dbReference type="OrthoDB" id="432483at2759"/>
<dbReference type="PhylomeDB" id="Q64FQ2"/>
<dbReference type="PRO" id="PR:Q64FQ2"/>
<dbReference type="Proteomes" id="UP000006548">
    <property type="component" value="Chromosome 2"/>
</dbReference>
<dbReference type="ExpressionAtlas" id="Q64FQ2">
    <property type="expression patterns" value="baseline and differential"/>
</dbReference>
<dbReference type="GO" id="GO:0005524">
    <property type="term" value="F:ATP binding"/>
    <property type="evidence" value="ECO:0007669"/>
    <property type="project" value="UniProtKB-KW"/>
</dbReference>
<dbReference type="GO" id="GO:0016301">
    <property type="term" value="F:kinase activity"/>
    <property type="evidence" value="ECO:0000250"/>
    <property type="project" value="TAIR"/>
</dbReference>
<dbReference type="GO" id="GO:0106310">
    <property type="term" value="F:protein serine kinase activity"/>
    <property type="evidence" value="ECO:0007669"/>
    <property type="project" value="RHEA"/>
</dbReference>
<dbReference type="GO" id="GO:0004674">
    <property type="term" value="F:protein serine/threonine kinase activity"/>
    <property type="evidence" value="ECO:0007669"/>
    <property type="project" value="UniProtKB-KW"/>
</dbReference>
<dbReference type="GO" id="GO:0009734">
    <property type="term" value="P:auxin-activated signaling pathway"/>
    <property type="evidence" value="ECO:0007669"/>
    <property type="project" value="UniProtKB-KW"/>
</dbReference>
<dbReference type="GO" id="GO:0048825">
    <property type="term" value="P:cotyledon development"/>
    <property type="evidence" value="ECO:0000316"/>
    <property type="project" value="TAIR"/>
</dbReference>
<dbReference type="CDD" id="cd05574">
    <property type="entry name" value="STKc_phototropin_like"/>
    <property type="match status" value="1"/>
</dbReference>
<dbReference type="FunFam" id="1.10.510.10:FF:000277">
    <property type="entry name" value="protein kinase PINOID"/>
    <property type="match status" value="1"/>
</dbReference>
<dbReference type="FunFam" id="3.30.200.20:FF:000351">
    <property type="entry name" value="protein kinase PINOID 2"/>
    <property type="match status" value="1"/>
</dbReference>
<dbReference type="FunFam" id="1.10.510.10:FF:000020">
    <property type="entry name" value="serine/threonine-protein kinase D6PK-like"/>
    <property type="match status" value="1"/>
</dbReference>
<dbReference type="Gene3D" id="3.30.200.20">
    <property type="entry name" value="Phosphorylase Kinase, domain 1"/>
    <property type="match status" value="1"/>
</dbReference>
<dbReference type="Gene3D" id="1.10.510.10">
    <property type="entry name" value="Transferase(Phosphotransferase) domain 1"/>
    <property type="match status" value="2"/>
</dbReference>
<dbReference type="InterPro" id="IPR000961">
    <property type="entry name" value="AGC-kinase_C"/>
</dbReference>
<dbReference type="InterPro" id="IPR011009">
    <property type="entry name" value="Kinase-like_dom_sf"/>
</dbReference>
<dbReference type="InterPro" id="IPR000719">
    <property type="entry name" value="Prot_kinase_dom"/>
</dbReference>
<dbReference type="InterPro" id="IPR008271">
    <property type="entry name" value="Ser/Thr_kinase_AS"/>
</dbReference>
<dbReference type="PANTHER" id="PTHR45637">
    <property type="entry name" value="FLIPPASE KINASE 1-RELATED"/>
    <property type="match status" value="1"/>
</dbReference>
<dbReference type="Pfam" id="PF00069">
    <property type="entry name" value="Pkinase"/>
    <property type="match status" value="2"/>
</dbReference>
<dbReference type="SMART" id="SM00220">
    <property type="entry name" value="S_TKc"/>
    <property type="match status" value="1"/>
</dbReference>
<dbReference type="SUPFAM" id="SSF56112">
    <property type="entry name" value="Protein kinase-like (PK-like)"/>
    <property type="match status" value="1"/>
</dbReference>
<dbReference type="PROSITE" id="PS51285">
    <property type="entry name" value="AGC_KINASE_CTER"/>
    <property type="match status" value="1"/>
</dbReference>
<dbReference type="PROSITE" id="PS50011">
    <property type="entry name" value="PROTEIN_KINASE_DOM"/>
    <property type="match status" value="1"/>
</dbReference>
<dbReference type="PROSITE" id="PS00108">
    <property type="entry name" value="PROTEIN_KINASE_ST"/>
    <property type="match status" value="1"/>
</dbReference>
<gene>
    <name type="primary">PID2</name>
    <name type="synonym">AGC1-10</name>
    <name type="ordered locus">At2g26700</name>
    <name type="ORF">F18A8.7</name>
</gene>
<protein>
    <recommendedName>
        <fullName>Protein kinase PINOID 2</fullName>
        <ecNumber>2.7.11.1</ecNumber>
    </recommendedName>
    <alternativeName>
        <fullName>Protein kinase AGC1-10</fullName>
    </alternativeName>
</protein>
<feature type="chain" id="PRO_0000411971" description="Protein kinase PINOID 2">
    <location>
        <begin position="1"/>
        <end position="525"/>
    </location>
</feature>
<feature type="domain" description="Protein kinase" evidence="1">
    <location>
        <begin position="87"/>
        <end position="465"/>
    </location>
</feature>
<feature type="domain" description="AGC-kinase C-terminal" evidence="2">
    <location>
        <begin position="466"/>
        <end position="525"/>
    </location>
</feature>
<feature type="region of interest" description="Disordered" evidence="4">
    <location>
        <begin position="1"/>
        <end position="27"/>
    </location>
</feature>
<feature type="active site" description="Proton acceptor" evidence="1 3">
    <location>
        <position position="214"/>
    </location>
</feature>
<feature type="binding site" evidence="1">
    <location>
        <begin position="93"/>
        <end position="101"/>
    </location>
    <ligand>
        <name>ATP</name>
        <dbReference type="ChEBI" id="CHEBI:30616"/>
    </ligand>
</feature>
<feature type="binding site" evidence="1">
    <location>
        <position position="118"/>
    </location>
    <ligand>
        <name>ATP</name>
        <dbReference type="ChEBI" id="CHEBI:30616"/>
    </ligand>
</feature>
<feature type="sequence conflict" description="In Ref. 4; BAF01078." evidence="6" ref="4">
    <original>D</original>
    <variation>G</variation>
    <location>
        <position position="214"/>
    </location>
</feature>
<accession>Q64FQ2</accession>
<accession>O48785</accession>
<accession>Q0WP71</accession>
<proteinExistence type="evidence at protein level"/>
<name>PID2_ARATH</name>
<reference key="1">
    <citation type="submission" date="2004-08" db="EMBL/GenBank/DDBJ databases">
        <title>Characterization of an AGC family member kinase, AGC1-10.</title>
        <authorList>
            <person name="Berendzen K.W."/>
            <person name="Okresz L."/>
            <person name="Anthony R."/>
            <person name="Henriques R."/>
            <person name="Bogre L."/>
            <person name="Koncz C."/>
        </authorList>
    </citation>
    <scope>NUCLEOTIDE SEQUENCE [GENOMIC DNA / MRNA]</scope>
</reference>
<reference key="2">
    <citation type="journal article" date="1999" name="Nature">
        <title>Sequence and analysis of chromosome 2 of the plant Arabidopsis thaliana.</title>
        <authorList>
            <person name="Lin X."/>
            <person name="Kaul S."/>
            <person name="Rounsley S.D."/>
            <person name="Shea T.P."/>
            <person name="Benito M.-I."/>
            <person name="Town C.D."/>
            <person name="Fujii C.Y."/>
            <person name="Mason T.M."/>
            <person name="Bowman C.L."/>
            <person name="Barnstead M.E."/>
            <person name="Feldblyum T.V."/>
            <person name="Buell C.R."/>
            <person name="Ketchum K.A."/>
            <person name="Lee J.J."/>
            <person name="Ronning C.M."/>
            <person name="Koo H.L."/>
            <person name="Moffat K.S."/>
            <person name="Cronin L.A."/>
            <person name="Shen M."/>
            <person name="Pai G."/>
            <person name="Van Aken S."/>
            <person name="Umayam L."/>
            <person name="Tallon L.J."/>
            <person name="Gill J.E."/>
            <person name="Adams M.D."/>
            <person name="Carrera A.J."/>
            <person name="Creasy T.H."/>
            <person name="Goodman H.M."/>
            <person name="Somerville C.R."/>
            <person name="Copenhaver G.P."/>
            <person name="Preuss D."/>
            <person name="Nierman W.C."/>
            <person name="White O."/>
            <person name="Eisen J.A."/>
            <person name="Salzberg S.L."/>
            <person name="Fraser C.M."/>
            <person name="Venter J.C."/>
        </authorList>
    </citation>
    <scope>NUCLEOTIDE SEQUENCE [LARGE SCALE GENOMIC DNA]</scope>
    <source>
        <strain>cv. Columbia</strain>
    </source>
</reference>
<reference key="3">
    <citation type="journal article" date="2017" name="Plant J.">
        <title>Araport11: a complete reannotation of the Arabidopsis thaliana reference genome.</title>
        <authorList>
            <person name="Cheng C.Y."/>
            <person name="Krishnakumar V."/>
            <person name="Chan A.P."/>
            <person name="Thibaud-Nissen F."/>
            <person name="Schobel S."/>
            <person name="Town C.D."/>
        </authorList>
    </citation>
    <scope>GENOME REANNOTATION</scope>
    <source>
        <strain>cv. Columbia</strain>
    </source>
</reference>
<reference key="4">
    <citation type="submission" date="2006-07" db="EMBL/GenBank/DDBJ databases">
        <title>Large-scale analysis of RIKEN Arabidopsis full-length (RAFL) cDNAs.</title>
        <authorList>
            <person name="Totoki Y."/>
            <person name="Seki M."/>
            <person name="Ishida J."/>
            <person name="Nakajima M."/>
            <person name="Enju A."/>
            <person name="Kamiya A."/>
            <person name="Narusaka M."/>
            <person name="Shin-i T."/>
            <person name="Nakagawa M."/>
            <person name="Sakamoto N."/>
            <person name="Oishi K."/>
            <person name="Kohara Y."/>
            <person name="Kobayashi M."/>
            <person name="Toyoda A."/>
            <person name="Sakaki Y."/>
            <person name="Sakurai T."/>
            <person name="Iida K."/>
            <person name="Akiyama K."/>
            <person name="Satou M."/>
            <person name="Toyoda T."/>
            <person name="Konagaya A."/>
            <person name="Carninci P."/>
            <person name="Kawai J."/>
            <person name="Hayashizaki Y."/>
            <person name="Shinozaki K."/>
        </authorList>
    </citation>
    <scope>NUCLEOTIDE SEQUENCE [LARGE SCALE MRNA]</scope>
    <source>
        <strain>cv. Columbia</strain>
    </source>
</reference>
<reference key="5">
    <citation type="journal article" date="2008" name="Proc. Natl. Acad. Sci. U.S.A.">
        <title>NPY genes and AGC kinases define two key steps in auxin-mediated organogenesis in Arabidopsis.</title>
        <authorList>
            <person name="Cheng Y."/>
            <person name="Qin G."/>
            <person name="Dai X."/>
            <person name="Zhao Y."/>
        </authorList>
    </citation>
    <scope>FUNCTION</scope>
    <scope>DEVELOPMENTAL STAGE</scope>
    <scope>DISRUPTION PHENOTYPE</scope>
</reference>
<sequence>MANSSIFYKDNESDYESSTVGPDSSRRTSWLSSSFTASPSCSSISHLSNHGLNSYNQSKPHKANQVAWEAMARLRRCCGRAVGLEHFRLLKRLGSGDIGSVYLCQIRGSPETAFYAMKVVDKEAVAVKKKLGRAEMEKKILGMLDHPFCPTLYAAFEASHYSFLVMEYCPGGDLYAVRLRQPSKRFTISSTRFYAAETLVALEYLHMMGIVYRDLKPENVLIREDGHVMLSDFDLSFKCDVVPQFLSDNDRDRGHQEDDDDISIRRKCSTPSCTTTPLNPVISCFSPTSSRRRKKNVVTTTIHENAAGTSDSVKSNDVSRTFSRSPSSCSRVSNGLRDISGGCPSIFAEPINARSKSFVGTHEYLAPEVISGQGHGSAVDWWTYGIFLYEMIFGRTPFKGDNNEKTLVNILKAPLTFPKVIVNSPKEYEDMVNAQDLIIKLLVKNPKKRLGSLKGSIEIKRHEFFEGVNWALIRSIKPPWVPKEETSHKTKGDNRSVNYYLPPRFMMSRKERNEPYHVSNYFDYF</sequence>